<comment type="function">
    <text evidence="1">Involved in unsaturated fatty acids biosynthesis. Catalyzes the dehydration of short chain beta-hydroxyacyl-ACPs and long chain saturated and unsaturated beta-hydroxyacyl-ACPs.</text>
</comment>
<comment type="catalytic activity">
    <reaction evidence="1">
        <text>a (3R)-hydroxyacyl-[ACP] = a (2E)-enoyl-[ACP] + H2O</text>
        <dbReference type="Rhea" id="RHEA:13097"/>
        <dbReference type="Rhea" id="RHEA-COMP:9925"/>
        <dbReference type="Rhea" id="RHEA-COMP:9945"/>
        <dbReference type="ChEBI" id="CHEBI:15377"/>
        <dbReference type="ChEBI" id="CHEBI:78784"/>
        <dbReference type="ChEBI" id="CHEBI:78827"/>
        <dbReference type="EC" id="4.2.1.59"/>
    </reaction>
</comment>
<comment type="subcellular location">
    <subcellularLocation>
        <location evidence="1">Cytoplasm</location>
    </subcellularLocation>
</comment>
<comment type="similarity">
    <text evidence="1">Belongs to the thioester dehydratase family. FabZ subfamily.</text>
</comment>
<sequence length="149" mass="16382">MSTPIAIDINKILKLLPHRYPFLLVDRVLEISPRESITALKNVTMNEPFFQGHFPGFPMMPGVLIIEALAQTAALLTFSDERAEDAIYYFAGIDGARFKKPVLPGDQLIMTAKLERDRAGIYKFAVQATADGEIAAEANITCAVRTKGA</sequence>
<reference key="1">
    <citation type="journal article" date="2013" name="Proc. Natl. Acad. Sci. U.S.A.">
        <title>Polynucleobacter necessarius, a model for genome reduction in both free-living and symbiotic bacteria.</title>
        <authorList>
            <person name="Boscaro V."/>
            <person name="Felletti M."/>
            <person name="Vannini C."/>
            <person name="Ackerman M.S."/>
            <person name="Chain P.S."/>
            <person name="Malfatti S."/>
            <person name="Vergez L.M."/>
            <person name="Shin M."/>
            <person name="Doak T.G."/>
            <person name="Lynch M."/>
            <person name="Petroni G."/>
        </authorList>
    </citation>
    <scope>NUCLEOTIDE SEQUENCE [LARGE SCALE GENOMIC DNA]</scope>
    <source>
        <strain>STIR1</strain>
    </source>
</reference>
<name>FABZ_POLNS</name>
<keyword id="KW-0963">Cytoplasm</keyword>
<keyword id="KW-0441">Lipid A biosynthesis</keyword>
<keyword id="KW-0444">Lipid biosynthesis</keyword>
<keyword id="KW-0443">Lipid metabolism</keyword>
<keyword id="KW-0456">Lyase</keyword>
<dbReference type="EC" id="4.2.1.59" evidence="1"/>
<dbReference type="EMBL" id="CP001010">
    <property type="protein sequence ID" value="ACB43781.1"/>
    <property type="molecule type" value="Genomic_DNA"/>
</dbReference>
<dbReference type="SMR" id="B1XTV4"/>
<dbReference type="STRING" id="452638.Pnec_0518"/>
<dbReference type="KEGG" id="pne:Pnec_0518"/>
<dbReference type="eggNOG" id="COG0764">
    <property type="taxonomic scope" value="Bacteria"/>
</dbReference>
<dbReference type="HOGENOM" id="CLU_078912_3_0_4"/>
<dbReference type="OrthoDB" id="9772788at2"/>
<dbReference type="GO" id="GO:0005737">
    <property type="term" value="C:cytoplasm"/>
    <property type="evidence" value="ECO:0007669"/>
    <property type="project" value="UniProtKB-SubCell"/>
</dbReference>
<dbReference type="GO" id="GO:0016020">
    <property type="term" value="C:membrane"/>
    <property type="evidence" value="ECO:0007669"/>
    <property type="project" value="GOC"/>
</dbReference>
<dbReference type="GO" id="GO:0019171">
    <property type="term" value="F:(3R)-hydroxyacyl-[acyl-carrier-protein] dehydratase activity"/>
    <property type="evidence" value="ECO:0007669"/>
    <property type="project" value="UniProtKB-EC"/>
</dbReference>
<dbReference type="GO" id="GO:0006633">
    <property type="term" value="P:fatty acid biosynthetic process"/>
    <property type="evidence" value="ECO:0007669"/>
    <property type="project" value="UniProtKB-UniRule"/>
</dbReference>
<dbReference type="GO" id="GO:0009245">
    <property type="term" value="P:lipid A biosynthetic process"/>
    <property type="evidence" value="ECO:0007669"/>
    <property type="project" value="UniProtKB-UniRule"/>
</dbReference>
<dbReference type="CDD" id="cd01288">
    <property type="entry name" value="FabZ"/>
    <property type="match status" value="1"/>
</dbReference>
<dbReference type="FunFam" id="3.10.129.10:FF:000001">
    <property type="entry name" value="3-hydroxyacyl-[acyl-carrier-protein] dehydratase FabZ"/>
    <property type="match status" value="1"/>
</dbReference>
<dbReference type="Gene3D" id="3.10.129.10">
    <property type="entry name" value="Hotdog Thioesterase"/>
    <property type="match status" value="1"/>
</dbReference>
<dbReference type="HAMAP" id="MF_00406">
    <property type="entry name" value="FabZ"/>
    <property type="match status" value="1"/>
</dbReference>
<dbReference type="InterPro" id="IPR013114">
    <property type="entry name" value="FabA_FabZ"/>
</dbReference>
<dbReference type="InterPro" id="IPR010084">
    <property type="entry name" value="FabZ"/>
</dbReference>
<dbReference type="InterPro" id="IPR029069">
    <property type="entry name" value="HotDog_dom_sf"/>
</dbReference>
<dbReference type="NCBIfam" id="TIGR01750">
    <property type="entry name" value="fabZ"/>
    <property type="match status" value="1"/>
</dbReference>
<dbReference type="NCBIfam" id="NF000582">
    <property type="entry name" value="PRK00006.1"/>
    <property type="match status" value="1"/>
</dbReference>
<dbReference type="PANTHER" id="PTHR30272">
    <property type="entry name" value="3-HYDROXYACYL-[ACYL-CARRIER-PROTEIN] DEHYDRATASE"/>
    <property type="match status" value="1"/>
</dbReference>
<dbReference type="PANTHER" id="PTHR30272:SF1">
    <property type="entry name" value="3-HYDROXYACYL-[ACYL-CARRIER-PROTEIN] DEHYDRATASE"/>
    <property type="match status" value="1"/>
</dbReference>
<dbReference type="Pfam" id="PF07977">
    <property type="entry name" value="FabA"/>
    <property type="match status" value="1"/>
</dbReference>
<dbReference type="SUPFAM" id="SSF54637">
    <property type="entry name" value="Thioesterase/thiol ester dehydrase-isomerase"/>
    <property type="match status" value="1"/>
</dbReference>
<proteinExistence type="inferred from homology"/>
<protein>
    <recommendedName>
        <fullName evidence="1">3-hydroxyacyl-[acyl-carrier-protein] dehydratase FabZ</fullName>
        <ecNumber evidence="1">4.2.1.59</ecNumber>
    </recommendedName>
    <alternativeName>
        <fullName evidence="1">(3R)-hydroxymyristoyl-[acyl-carrier-protein] dehydratase</fullName>
        <shortName evidence="1">(3R)-hydroxymyristoyl-ACP dehydrase</shortName>
    </alternativeName>
    <alternativeName>
        <fullName evidence="1">Beta-hydroxyacyl-ACP dehydratase</fullName>
    </alternativeName>
</protein>
<organism>
    <name type="scientific">Polynucleobacter necessarius subsp. necessarius (strain STIR1)</name>
    <dbReference type="NCBI Taxonomy" id="452638"/>
    <lineage>
        <taxon>Bacteria</taxon>
        <taxon>Pseudomonadati</taxon>
        <taxon>Pseudomonadota</taxon>
        <taxon>Betaproteobacteria</taxon>
        <taxon>Burkholderiales</taxon>
        <taxon>Burkholderiaceae</taxon>
        <taxon>Polynucleobacter</taxon>
    </lineage>
</organism>
<accession>B1XTV4</accession>
<gene>
    <name evidence="1" type="primary">fabZ</name>
    <name type="ordered locus">Pnec_0518</name>
</gene>
<evidence type="ECO:0000255" key="1">
    <source>
        <dbReference type="HAMAP-Rule" id="MF_00406"/>
    </source>
</evidence>
<feature type="chain" id="PRO_1000123651" description="3-hydroxyacyl-[acyl-carrier-protein] dehydratase FabZ">
    <location>
        <begin position="1"/>
        <end position="149"/>
    </location>
</feature>
<feature type="active site" evidence="1">
    <location>
        <position position="53"/>
    </location>
</feature>